<gene>
    <name evidence="1" type="primary">rpmC</name>
    <name type="ordered locus">TM1040_0262</name>
</gene>
<evidence type="ECO:0000255" key="1">
    <source>
        <dbReference type="HAMAP-Rule" id="MF_00374"/>
    </source>
</evidence>
<evidence type="ECO:0000305" key="2"/>
<dbReference type="EMBL" id="CP000377">
    <property type="protein sequence ID" value="ABF62995.1"/>
    <property type="molecule type" value="Genomic_DNA"/>
</dbReference>
<dbReference type="RefSeq" id="WP_005621881.1">
    <property type="nucleotide sequence ID" value="NC_008044.1"/>
</dbReference>
<dbReference type="SMR" id="Q1GK21"/>
<dbReference type="STRING" id="292414.TM1040_0262"/>
<dbReference type="GeneID" id="28248373"/>
<dbReference type="KEGG" id="sit:TM1040_0262"/>
<dbReference type="eggNOG" id="COG0255">
    <property type="taxonomic scope" value="Bacteria"/>
</dbReference>
<dbReference type="HOGENOM" id="CLU_158491_1_0_5"/>
<dbReference type="OrthoDB" id="9815192at2"/>
<dbReference type="Proteomes" id="UP000000636">
    <property type="component" value="Chromosome"/>
</dbReference>
<dbReference type="GO" id="GO:0022625">
    <property type="term" value="C:cytosolic large ribosomal subunit"/>
    <property type="evidence" value="ECO:0007669"/>
    <property type="project" value="TreeGrafter"/>
</dbReference>
<dbReference type="GO" id="GO:0003735">
    <property type="term" value="F:structural constituent of ribosome"/>
    <property type="evidence" value="ECO:0007669"/>
    <property type="project" value="InterPro"/>
</dbReference>
<dbReference type="GO" id="GO:0006412">
    <property type="term" value="P:translation"/>
    <property type="evidence" value="ECO:0007669"/>
    <property type="project" value="UniProtKB-UniRule"/>
</dbReference>
<dbReference type="CDD" id="cd00427">
    <property type="entry name" value="Ribosomal_L29_HIP"/>
    <property type="match status" value="1"/>
</dbReference>
<dbReference type="FunFam" id="1.10.287.310:FF:000001">
    <property type="entry name" value="50S ribosomal protein L29"/>
    <property type="match status" value="1"/>
</dbReference>
<dbReference type="Gene3D" id="1.10.287.310">
    <property type="match status" value="1"/>
</dbReference>
<dbReference type="HAMAP" id="MF_00374">
    <property type="entry name" value="Ribosomal_uL29"/>
    <property type="match status" value="1"/>
</dbReference>
<dbReference type="InterPro" id="IPR050063">
    <property type="entry name" value="Ribosomal_protein_uL29"/>
</dbReference>
<dbReference type="InterPro" id="IPR001854">
    <property type="entry name" value="Ribosomal_uL29"/>
</dbReference>
<dbReference type="InterPro" id="IPR036049">
    <property type="entry name" value="Ribosomal_uL29_sf"/>
</dbReference>
<dbReference type="NCBIfam" id="TIGR00012">
    <property type="entry name" value="L29"/>
    <property type="match status" value="1"/>
</dbReference>
<dbReference type="PANTHER" id="PTHR10916">
    <property type="entry name" value="60S RIBOSOMAL PROTEIN L35/50S RIBOSOMAL PROTEIN L29"/>
    <property type="match status" value="1"/>
</dbReference>
<dbReference type="PANTHER" id="PTHR10916:SF0">
    <property type="entry name" value="LARGE RIBOSOMAL SUBUNIT PROTEIN UL29C"/>
    <property type="match status" value="1"/>
</dbReference>
<dbReference type="Pfam" id="PF00831">
    <property type="entry name" value="Ribosomal_L29"/>
    <property type="match status" value="1"/>
</dbReference>
<dbReference type="SUPFAM" id="SSF46561">
    <property type="entry name" value="Ribosomal protein L29 (L29p)"/>
    <property type="match status" value="1"/>
</dbReference>
<name>RL29_RUEST</name>
<organism>
    <name type="scientific">Ruegeria sp. (strain TM1040)</name>
    <name type="common">Silicibacter sp.</name>
    <dbReference type="NCBI Taxonomy" id="292414"/>
    <lineage>
        <taxon>Bacteria</taxon>
        <taxon>Pseudomonadati</taxon>
        <taxon>Pseudomonadota</taxon>
        <taxon>Alphaproteobacteria</taxon>
        <taxon>Rhodobacterales</taxon>
        <taxon>Roseobacteraceae</taxon>
        <taxon>Ruegeria</taxon>
    </lineage>
</organism>
<sequence>MNAKDLRDKTVDELRDELANLKKESFNLRFQQATGQLENTAGIKAARRNAARVKTILNEKAAAAAE</sequence>
<feature type="chain" id="PRO_1000007610" description="Large ribosomal subunit protein uL29">
    <location>
        <begin position="1"/>
        <end position="66"/>
    </location>
</feature>
<comment type="similarity">
    <text evidence="1">Belongs to the universal ribosomal protein uL29 family.</text>
</comment>
<keyword id="KW-1185">Reference proteome</keyword>
<keyword id="KW-0687">Ribonucleoprotein</keyword>
<keyword id="KW-0689">Ribosomal protein</keyword>
<reference key="1">
    <citation type="submission" date="2006-05" db="EMBL/GenBank/DDBJ databases">
        <title>Complete sequence of chromosome of Silicibacter sp. TM1040.</title>
        <authorList>
            <consortium name="US DOE Joint Genome Institute"/>
            <person name="Copeland A."/>
            <person name="Lucas S."/>
            <person name="Lapidus A."/>
            <person name="Barry K."/>
            <person name="Detter J.C."/>
            <person name="Glavina del Rio T."/>
            <person name="Hammon N."/>
            <person name="Israni S."/>
            <person name="Dalin E."/>
            <person name="Tice H."/>
            <person name="Pitluck S."/>
            <person name="Brettin T."/>
            <person name="Bruce D."/>
            <person name="Han C."/>
            <person name="Tapia R."/>
            <person name="Goodwin L."/>
            <person name="Thompson L.S."/>
            <person name="Gilna P."/>
            <person name="Schmutz J."/>
            <person name="Larimer F."/>
            <person name="Land M."/>
            <person name="Hauser L."/>
            <person name="Kyrpides N."/>
            <person name="Kim E."/>
            <person name="Belas R."/>
            <person name="Moran M.A."/>
            <person name="Buchan A."/>
            <person name="Gonzalez J.M."/>
            <person name="Schell M.A."/>
            <person name="Sun F."/>
            <person name="Richardson P."/>
        </authorList>
    </citation>
    <scope>NUCLEOTIDE SEQUENCE [LARGE SCALE GENOMIC DNA]</scope>
    <source>
        <strain>TM1040</strain>
    </source>
</reference>
<protein>
    <recommendedName>
        <fullName evidence="1">Large ribosomal subunit protein uL29</fullName>
    </recommendedName>
    <alternativeName>
        <fullName evidence="2">50S ribosomal protein L29</fullName>
    </alternativeName>
</protein>
<proteinExistence type="inferred from homology"/>
<accession>Q1GK21</accession>